<dbReference type="EMBL" id="U00089">
    <property type="protein sequence ID" value="AAB96126.1"/>
    <property type="molecule type" value="Genomic_DNA"/>
</dbReference>
<dbReference type="PIR" id="S73804">
    <property type="entry name" value="S73804"/>
</dbReference>
<dbReference type="RefSeq" id="NP_110046.1">
    <property type="nucleotide sequence ID" value="NC_000912.1"/>
</dbReference>
<dbReference type="RefSeq" id="WP_010874714.1">
    <property type="nucleotide sequence ID" value="NZ_OU342337.1"/>
</dbReference>
<dbReference type="SMR" id="P75422"/>
<dbReference type="STRING" id="272634.MPN_358"/>
<dbReference type="EnsemblBacteria" id="AAB96126">
    <property type="protein sequence ID" value="AAB96126"/>
    <property type="gene ID" value="MPN_358"/>
</dbReference>
<dbReference type="KEGG" id="mpn:MPN_358"/>
<dbReference type="PATRIC" id="fig|272634.6.peg.385"/>
<dbReference type="HOGENOM" id="CLU_038250_0_0_14"/>
<dbReference type="BioCyc" id="MPNE272634:G1GJ3-563-MONOMER"/>
<dbReference type="Proteomes" id="UP000000808">
    <property type="component" value="Chromosome"/>
</dbReference>
<dbReference type="GO" id="GO:0005886">
    <property type="term" value="C:plasma membrane"/>
    <property type="evidence" value="ECO:0007669"/>
    <property type="project" value="UniProtKB-SubCell"/>
</dbReference>
<protein>
    <recommendedName>
        <fullName>Uncharacterized protein MG255 homolog</fullName>
    </recommendedName>
</protein>
<comment type="subcellular location">
    <subcellularLocation>
        <location evidence="2">Cell membrane</location>
        <topology evidence="2">Multi-pass membrane protein</topology>
    </subcellularLocation>
</comment>
<sequence>METQNQIETLRYIFNQLNNQDKPQIIWFSGEGEDEKINFLIRLDNYFQPTFVQDLTINFLPAFVKRNKKNPPNTLAKGNFVNIANKLLAVLARSLSWKQLNKPQQKWLLWLLVPFLLLRQLWLKKKVSKIFQFVNERGILSFIKEQWPILTTLVTVGTTLGTPIFSITISQQKAILENAGHGAFVFLVIFSVFAIALGLVSSLIFLVSSLFSIRQKKSLQQLHQILSRLINKYFCFANSEQNQTGRYQLKNTGVCFFYGFDFEEKEYITQAMNLLLLLKQTNCFVLVGCKESNMLLIKNKVEPDINLKQSSLYLDLKSQISPLAQISKYNLLFEELALDADMFYLEDFFALLKTPRQIVNFLFRIKQNLKEFHQPQTLWFDYLALWALVIATDFEFNNVLWSFNDYLSLTNKQKEDYASVNLTAFFNRSLKNHKDNSLLFKPELFNTHAYIPETYTQVTLENIDSDKRAQLVPLNWFSQQKFSDFIEEKINFWQTQQAENKVFYLTLGERIFFLVLVNKKFKQIKLEAALKYLN</sequence>
<name>Y358_MYCPN</name>
<gene>
    <name type="ordered locus">MPN_358</name>
    <name type="ORF">H91_orf534</name>
    <name type="ORF">MP478</name>
</gene>
<feature type="chain" id="PRO_0000210491" description="Uncharacterized protein MG255 homolog">
    <location>
        <begin position="1"/>
        <end position="534"/>
    </location>
</feature>
<feature type="transmembrane region" description="Helical" evidence="1">
    <location>
        <begin position="149"/>
        <end position="169"/>
    </location>
</feature>
<feature type="transmembrane region" description="Helical" evidence="1">
    <location>
        <begin position="185"/>
        <end position="205"/>
    </location>
</feature>
<proteinExistence type="predicted"/>
<organism>
    <name type="scientific">Mycoplasma pneumoniae (strain ATCC 29342 / M129 / Subtype 1)</name>
    <name type="common">Mycoplasmoides pneumoniae</name>
    <dbReference type="NCBI Taxonomy" id="272634"/>
    <lineage>
        <taxon>Bacteria</taxon>
        <taxon>Bacillati</taxon>
        <taxon>Mycoplasmatota</taxon>
        <taxon>Mycoplasmoidales</taxon>
        <taxon>Mycoplasmoidaceae</taxon>
        <taxon>Mycoplasmoides</taxon>
    </lineage>
</organism>
<keyword id="KW-1003">Cell membrane</keyword>
<keyword id="KW-0472">Membrane</keyword>
<keyword id="KW-1185">Reference proteome</keyword>
<keyword id="KW-0812">Transmembrane</keyword>
<keyword id="KW-1133">Transmembrane helix</keyword>
<reference key="1">
    <citation type="journal article" date="1996" name="Nucleic Acids Res.">
        <title>Complete sequence analysis of the genome of the bacterium Mycoplasma pneumoniae.</title>
        <authorList>
            <person name="Himmelreich R."/>
            <person name="Hilbert H."/>
            <person name="Plagens H."/>
            <person name="Pirkl E."/>
            <person name="Li B.-C."/>
            <person name="Herrmann R."/>
        </authorList>
    </citation>
    <scope>NUCLEOTIDE SEQUENCE [LARGE SCALE GENOMIC DNA]</scope>
    <source>
        <strain>ATCC 29342 / M129 / Subtype 1</strain>
    </source>
</reference>
<accession>P75422</accession>
<evidence type="ECO:0000255" key="1"/>
<evidence type="ECO:0000305" key="2"/>